<organism>
    <name type="scientific">Xenopus tropicalis</name>
    <name type="common">Western clawed frog</name>
    <name type="synonym">Silurana tropicalis</name>
    <dbReference type="NCBI Taxonomy" id="8364"/>
    <lineage>
        <taxon>Eukaryota</taxon>
        <taxon>Metazoa</taxon>
        <taxon>Chordata</taxon>
        <taxon>Craniata</taxon>
        <taxon>Vertebrata</taxon>
        <taxon>Euteleostomi</taxon>
        <taxon>Amphibia</taxon>
        <taxon>Batrachia</taxon>
        <taxon>Anura</taxon>
        <taxon>Pipoidea</taxon>
        <taxon>Pipidae</taxon>
        <taxon>Xenopodinae</taxon>
        <taxon>Xenopus</taxon>
        <taxon>Silurana</taxon>
    </lineage>
</organism>
<evidence type="ECO:0000250" key="1"/>
<evidence type="ECO:0000255" key="2">
    <source>
        <dbReference type="PROSITE-ProRule" id="PRU00147"/>
    </source>
</evidence>
<evidence type="ECO:0000255" key="3">
    <source>
        <dbReference type="PROSITE-ProRule" id="PRU00192"/>
    </source>
</evidence>
<evidence type="ECO:0000256" key="4">
    <source>
        <dbReference type="SAM" id="MobiDB-lite"/>
    </source>
</evidence>
<evidence type="ECO:0000305" key="5"/>
<protein>
    <recommendedName>
        <fullName>Sorting nexin-33</fullName>
    </recommendedName>
    <alternativeName>
        <fullName>SH3 and PX domain-containing protein 3</fullName>
    </alternativeName>
</protein>
<comment type="function">
    <text evidence="1">Plays a role in the reorganization of the cytoskeleton, endocytosis and cellular vesicle trafficking, both during interphase and at the end of mitotic cell divisions. Required for efficient progress through mitosis and cytokinesis. Required for normal formation of the cleavage furrow at the end of mitosis. Modulates endocytosis of cell-surface proteins. Promotes membrane tubulation (in vitro). May promote the formation of macropinosomes (By similarity).</text>
</comment>
<comment type="subcellular location">
    <subcellularLocation>
        <location evidence="1">Cytoplasm</location>
        <location evidence="1">Cytosol</location>
    </subcellularLocation>
    <subcellularLocation>
        <location evidence="1">Membrane</location>
        <topology evidence="1">Peripheral membrane protein</topology>
        <orientation evidence="1">Cytoplasmic side</orientation>
    </subcellularLocation>
    <subcellularLocation>
        <location evidence="1">Cytoplasmic vesicle membrane</location>
        <topology evidence="1">Peripheral membrane protein</topology>
        <orientation evidence="1">Cytoplasmic side</orientation>
    </subcellularLocation>
    <text evidence="1">Primarily detected in the cytosol. A minor proportion is membrane-bound (By similarity).</text>
</comment>
<comment type="domain">
    <text evidence="1">The PX and BAR domains mediate association with membranes and are required for membrane tubulation.</text>
</comment>
<comment type="similarity">
    <text evidence="5">Belongs to the sorting nexin family.</text>
</comment>
<accession>Q28GP7</accession>
<gene>
    <name type="primary">snx33</name>
    <name type="synonym">sh3px3</name>
    <name type="ORF">TEgg059f08.1</name>
</gene>
<keyword id="KW-0131">Cell cycle</keyword>
<keyword id="KW-0132">Cell division</keyword>
<keyword id="KW-0963">Cytoplasm</keyword>
<keyword id="KW-0968">Cytoplasmic vesicle</keyword>
<keyword id="KW-0254">Endocytosis</keyword>
<keyword id="KW-0472">Membrane</keyword>
<keyword id="KW-0498">Mitosis</keyword>
<keyword id="KW-0653">Protein transport</keyword>
<keyword id="KW-1185">Reference proteome</keyword>
<keyword id="KW-0728">SH3 domain</keyword>
<keyword id="KW-0813">Transport</keyword>
<proteinExistence type="evidence at transcript level"/>
<name>SNX33_XENTR</name>
<feature type="chain" id="PRO_0000311951" description="Sorting nexin-33">
    <location>
        <begin position="1"/>
        <end position="549"/>
    </location>
</feature>
<feature type="domain" description="SH3" evidence="3">
    <location>
        <begin position="1"/>
        <end position="61"/>
    </location>
</feature>
<feature type="domain" description="PX" evidence="2">
    <location>
        <begin position="205"/>
        <end position="315"/>
    </location>
</feature>
<feature type="domain" description="BAR">
    <location>
        <begin position="346"/>
        <end position="549"/>
    </location>
</feature>
<feature type="region of interest" description="Disordered" evidence="4">
    <location>
        <begin position="66"/>
        <end position="137"/>
    </location>
</feature>
<feature type="compositionally biased region" description="Polar residues" evidence="4">
    <location>
        <begin position="66"/>
        <end position="83"/>
    </location>
</feature>
<feature type="compositionally biased region" description="Acidic residues" evidence="4">
    <location>
        <begin position="86"/>
        <end position="101"/>
    </location>
</feature>
<feature type="compositionally biased region" description="Polar residues" evidence="4">
    <location>
        <begin position="110"/>
        <end position="119"/>
    </location>
</feature>
<feature type="compositionally biased region" description="Basic and acidic residues" evidence="4">
    <location>
        <begin position="127"/>
        <end position="137"/>
    </location>
</feature>
<sequence length="549" mass="63298">MALKARALYSFQGENKEEINILENEELHLFSDVSLDGWLQGTNSRGQTGLFPASYVEILRPRSGSVQVDYSGHTQGYTDSPHQGSYDDDEEDDDDWDDWDDGQTVVDEPSGSNGVSRSQLQHHHHYPRPEYTHRPRPALERQDSIASGKRGSVVGRNLNRFSSFVRSGVEAFVLGDVPQFGGVSESHAIEMGPKGPQWKANPRPFSCSVEEPTKQTKFKGIKSYISYRLTPDPCNSPVYRRYKHFDWLYNRLLHKFTVISVPHLPEKQATGRFEEDFIQKRKRRLVLWMDHMTSHPVLSQYDGFQHFLSCQDEKQWKAGKRRAERDELVGASFLLTLQLPTEHQDLQDVEERVDVFKAFSKKMDENVLQLSSVVSELARKHLGGFRKEFQRLGAALQGLSHSFQLDPPYSSEPLVGAISHTGRTYEAVGEMFAEQPKNDQFRFLDTLSLYQGLLSNFPDIIHLQKGAFAKVKESQRMSDEGRMEQDEADGIRKRCRVVGFALQAEINHFHQRRLQDFKQAIQHYLKEQILFYRRVSQELEKTLHMYDDL</sequence>
<reference key="1">
    <citation type="submission" date="2006-10" db="EMBL/GenBank/DDBJ databases">
        <authorList>
            <consortium name="Sanger Xenopus tropicalis EST/cDNA project"/>
        </authorList>
    </citation>
    <scope>NUCLEOTIDE SEQUENCE [LARGE SCALE MRNA]</scope>
    <source>
        <tissue>Egg</tissue>
    </source>
</reference>
<reference key="2">
    <citation type="submission" date="2006-11" db="EMBL/GenBank/DDBJ databases">
        <authorList>
            <consortium name="NIH - Xenopus Gene Collection (XGC) project"/>
        </authorList>
    </citation>
    <scope>NUCLEOTIDE SEQUENCE [LARGE SCALE MRNA]</scope>
    <source>
        <strain>N6</strain>
        <tissue>Lung</tissue>
    </source>
</reference>
<dbReference type="EMBL" id="CR761284">
    <property type="protein sequence ID" value="CAJ81278.1"/>
    <property type="molecule type" value="mRNA"/>
</dbReference>
<dbReference type="EMBL" id="BC127346">
    <property type="protein sequence ID" value="AAI27347.1"/>
    <property type="molecule type" value="mRNA"/>
</dbReference>
<dbReference type="RefSeq" id="NP_001016368.1">
    <property type="nucleotide sequence ID" value="NM_001016368.2"/>
</dbReference>
<dbReference type="RefSeq" id="XP_012822029.1">
    <property type="nucleotide sequence ID" value="XM_012966575.3"/>
</dbReference>
<dbReference type="RefSeq" id="XP_017947573.1">
    <property type="nucleotide sequence ID" value="XM_018092084.2"/>
</dbReference>
<dbReference type="SMR" id="Q28GP7"/>
<dbReference type="FunCoup" id="Q28GP7">
    <property type="interactions" value="1068"/>
</dbReference>
<dbReference type="STRING" id="8364.ENSXETP00000012456"/>
<dbReference type="PaxDb" id="8364-ENSXETP00000033408"/>
<dbReference type="DNASU" id="549122"/>
<dbReference type="GeneID" id="549122"/>
<dbReference type="KEGG" id="xtr:549122"/>
<dbReference type="AGR" id="Xenbase:XB-GENE-955365"/>
<dbReference type="CTD" id="257364"/>
<dbReference type="Xenbase" id="XB-GENE-955365">
    <property type="gene designation" value="snx33"/>
</dbReference>
<dbReference type="eggNOG" id="KOG2528">
    <property type="taxonomic scope" value="Eukaryota"/>
</dbReference>
<dbReference type="InParanoid" id="Q28GP7"/>
<dbReference type="OMA" id="QAFQMDP"/>
<dbReference type="OrthoDB" id="10254720at2759"/>
<dbReference type="PhylomeDB" id="Q28GP7"/>
<dbReference type="TreeFam" id="TF314082"/>
<dbReference type="Proteomes" id="UP000008143">
    <property type="component" value="Chromosome 3"/>
</dbReference>
<dbReference type="Bgee" id="ENSXETG00000015279">
    <property type="expression patterns" value="Expressed in 4-cell stage embryo and 13 other cell types or tissues"/>
</dbReference>
<dbReference type="GO" id="GO:0031410">
    <property type="term" value="C:cytoplasmic vesicle"/>
    <property type="evidence" value="ECO:0000250"/>
    <property type="project" value="UniProtKB"/>
</dbReference>
<dbReference type="GO" id="GO:0030659">
    <property type="term" value="C:cytoplasmic vesicle membrane"/>
    <property type="evidence" value="ECO:0007669"/>
    <property type="project" value="UniProtKB-SubCell"/>
</dbReference>
<dbReference type="GO" id="GO:0005829">
    <property type="term" value="C:cytosol"/>
    <property type="evidence" value="ECO:0007669"/>
    <property type="project" value="UniProtKB-SubCell"/>
</dbReference>
<dbReference type="GO" id="GO:0035091">
    <property type="term" value="F:phosphatidylinositol binding"/>
    <property type="evidence" value="ECO:0007669"/>
    <property type="project" value="InterPro"/>
</dbReference>
<dbReference type="GO" id="GO:0036089">
    <property type="term" value="P:cleavage furrow formation"/>
    <property type="evidence" value="ECO:0000250"/>
    <property type="project" value="UniProtKB"/>
</dbReference>
<dbReference type="GO" id="GO:0006897">
    <property type="term" value="P:endocytosis"/>
    <property type="evidence" value="ECO:0000250"/>
    <property type="project" value="UniProtKB"/>
</dbReference>
<dbReference type="GO" id="GO:0016197">
    <property type="term" value="P:endosomal transport"/>
    <property type="evidence" value="ECO:0000250"/>
    <property type="project" value="UniProtKB"/>
</dbReference>
<dbReference type="GO" id="GO:0007032">
    <property type="term" value="P:endosome organization"/>
    <property type="evidence" value="ECO:0000250"/>
    <property type="project" value="UniProtKB"/>
</dbReference>
<dbReference type="GO" id="GO:0044351">
    <property type="term" value="P:macropinocytosis"/>
    <property type="evidence" value="ECO:0000250"/>
    <property type="project" value="UniProtKB"/>
</dbReference>
<dbReference type="GO" id="GO:0000281">
    <property type="term" value="P:mitotic cytokinesis"/>
    <property type="evidence" value="ECO:0000250"/>
    <property type="project" value="UniProtKB"/>
</dbReference>
<dbReference type="GO" id="GO:0097320">
    <property type="term" value="P:plasma membrane tubulation"/>
    <property type="evidence" value="ECO:0000250"/>
    <property type="project" value="UniProtKB"/>
</dbReference>
<dbReference type="GO" id="GO:0015031">
    <property type="term" value="P:protein transport"/>
    <property type="evidence" value="ECO:0007669"/>
    <property type="project" value="UniProtKB-KW"/>
</dbReference>
<dbReference type="FunFam" id="1.20.1270.60:FF:000033">
    <property type="entry name" value="Sorting nexin"/>
    <property type="match status" value="1"/>
</dbReference>
<dbReference type="FunFam" id="2.30.30.40:FF:000116">
    <property type="entry name" value="Sorting nexin"/>
    <property type="match status" value="1"/>
</dbReference>
<dbReference type="FunFam" id="3.30.1520.10:FF:000004">
    <property type="entry name" value="Sorting nexin"/>
    <property type="match status" value="1"/>
</dbReference>
<dbReference type="Gene3D" id="1.20.1270.60">
    <property type="entry name" value="Arfaptin homology (AH) domain/BAR domain"/>
    <property type="match status" value="1"/>
</dbReference>
<dbReference type="Gene3D" id="3.30.1520.10">
    <property type="entry name" value="Phox-like domain"/>
    <property type="match status" value="1"/>
</dbReference>
<dbReference type="Gene3D" id="2.30.30.40">
    <property type="entry name" value="SH3 Domains"/>
    <property type="match status" value="1"/>
</dbReference>
<dbReference type="InterPro" id="IPR027267">
    <property type="entry name" value="AH/BAR_dom_sf"/>
</dbReference>
<dbReference type="InterPro" id="IPR001683">
    <property type="entry name" value="PX_dom"/>
</dbReference>
<dbReference type="InterPro" id="IPR036871">
    <property type="entry name" value="PX_dom_sf"/>
</dbReference>
<dbReference type="InterPro" id="IPR036028">
    <property type="entry name" value="SH3-like_dom_sf"/>
</dbReference>
<dbReference type="InterPro" id="IPR001452">
    <property type="entry name" value="SH3_domain"/>
</dbReference>
<dbReference type="InterPro" id="IPR014536">
    <property type="entry name" value="Snx9_fam"/>
</dbReference>
<dbReference type="InterPro" id="IPR019497">
    <property type="entry name" value="Sorting_nexin_WASP-bd-dom"/>
</dbReference>
<dbReference type="PANTHER" id="PTHR45827">
    <property type="entry name" value="SORTING NEXIN"/>
    <property type="match status" value="1"/>
</dbReference>
<dbReference type="PANTHER" id="PTHR45827:SF3">
    <property type="entry name" value="SORTING NEXIN-33"/>
    <property type="match status" value="1"/>
</dbReference>
<dbReference type="Pfam" id="PF10456">
    <property type="entry name" value="BAR_3_WASP_bdg"/>
    <property type="match status" value="1"/>
</dbReference>
<dbReference type="Pfam" id="PF00787">
    <property type="entry name" value="PX"/>
    <property type="match status" value="1"/>
</dbReference>
<dbReference type="Pfam" id="PF14604">
    <property type="entry name" value="SH3_9"/>
    <property type="match status" value="1"/>
</dbReference>
<dbReference type="PIRSF" id="PIRSF027744">
    <property type="entry name" value="Snx9"/>
    <property type="match status" value="1"/>
</dbReference>
<dbReference type="SMART" id="SM00312">
    <property type="entry name" value="PX"/>
    <property type="match status" value="1"/>
</dbReference>
<dbReference type="SMART" id="SM00326">
    <property type="entry name" value="SH3"/>
    <property type="match status" value="1"/>
</dbReference>
<dbReference type="SUPFAM" id="SSF64268">
    <property type="entry name" value="PX domain"/>
    <property type="match status" value="1"/>
</dbReference>
<dbReference type="SUPFAM" id="SSF50044">
    <property type="entry name" value="SH3-domain"/>
    <property type="match status" value="1"/>
</dbReference>
<dbReference type="PROSITE" id="PS50195">
    <property type="entry name" value="PX"/>
    <property type="match status" value="1"/>
</dbReference>
<dbReference type="PROSITE" id="PS50002">
    <property type="entry name" value="SH3"/>
    <property type="match status" value="1"/>
</dbReference>